<gene>
    <name type="primary">ctaF</name>
    <name type="ordered locus">Cgl2194</name>
    <name type="ordered locus">cg2408</name>
</gene>
<comment type="function">
    <text>Part of cytochrome c oxidase, its function is unknown.</text>
</comment>
<comment type="catalytic activity">
    <reaction>
        <text>4 Fe(II)-[cytochrome c] + O2 + 8 H(+)(in) = 4 Fe(III)-[cytochrome c] + 2 H2O + 4 H(+)(out)</text>
        <dbReference type="Rhea" id="RHEA:11436"/>
        <dbReference type="Rhea" id="RHEA-COMP:10350"/>
        <dbReference type="Rhea" id="RHEA-COMP:14399"/>
        <dbReference type="ChEBI" id="CHEBI:15377"/>
        <dbReference type="ChEBI" id="CHEBI:15378"/>
        <dbReference type="ChEBI" id="CHEBI:15379"/>
        <dbReference type="ChEBI" id="CHEBI:29033"/>
        <dbReference type="ChEBI" id="CHEBI:29034"/>
        <dbReference type="EC" id="7.1.1.9"/>
    </reaction>
</comment>
<comment type="subunit">
    <text>Associates with subunits I, II and III to form cytochrome c oxidase. The 4 subunit cytochrome c oxidase forms a supercomplex with cytochrome bc1.</text>
</comment>
<comment type="subcellular location">
    <subcellularLocation>
        <location>Cell membrane</location>
        <topology>Multi-pass membrane protein</topology>
    </subcellularLocation>
</comment>
<comment type="similarity">
    <text evidence="2">Belongs to the cytochrome c oxidase bacterial subunit CtaF family.</text>
</comment>
<proteinExistence type="evidence at protein level"/>
<feature type="chain" id="PRO_0000220015" description="Cytochrome c oxidase polypeptide 4">
    <location>
        <begin position="1"/>
        <end position="143"/>
    </location>
</feature>
<feature type="transmembrane region" description="Helical" evidence="1">
    <location>
        <begin position="7"/>
        <end position="27"/>
    </location>
</feature>
<feature type="transmembrane region" description="Helical" evidence="1">
    <location>
        <begin position="40"/>
        <end position="60"/>
    </location>
</feature>
<feature type="transmembrane region" description="Helical" evidence="1">
    <location>
        <begin position="86"/>
        <end position="106"/>
    </location>
</feature>
<feature type="transmembrane region" description="Helical" evidence="1">
    <location>
        <begin position="107"/>
        <end position="127"/>
    </location>
</feature>
<feature type="helix" evidence="3">
    <location>
        <begin position="2"/>
        <end position="6"/>
    </location>
</feature>
<feature type="helix" evidence="3">
    <location>
        <begin position="9"/>
        <end position="28"/>
    </location>
</feature>
<feature type="strand" evidence="3">
    <location>
        <begin position="32"/>
        <end position="34"/>
    </location>
</feature>
<feature type="helix" evidence="3">
    <location>
        <begin position="40"/>
        <end position="64"/>
    </location>
</feature>
<feature type="helix" evidence="3">
    <location>
        <begin position="71"/>
        <end position="73"/>
    </location>
</feature>
<feature type="helix" evidence="3">
    <location>
        <begin position="79"/>
        <end position="82"/>
    </location>
</feature>
<feature type="strand" evidence="3">
    <location>
        <begin position="84"/>
        <end position="88"/>
    </location>
</feature>
<feature type="helix" evidence="3">
    <location>
        <begin position="95"/>
        <end position="112"/>
    </location>
</feature>
<feature type="helix" evidence="3">
    <location>
        <begin position="115"/>
        <end position="133"/>
    </location>
</feature>
<feature type="turn" evidence="3">
    <location>
        <begin position="134"/>
        <end position="137"/>
    </location>
</feature>
<dbReference type="EC" id="7.1.1.9"/>
<dbReference type="EMBL" id="BA000036">
    <property type="protein sequence ID" value="BAB99587.1"/>
    <property type="molecule type" value="Genomic_DNA"/>
</dbReference>
<dbReference type="EMBL" id="BX927154">
    <property type="protein sequence ID" value="CAF20535.1"/>
    <property type="molecule type" value="Genomic_DNA"/>
</dbReference>
<dbReference type="RefSeq" id="NP_601398.1">
    <property type="nucleotide sequence ID" value="NC_003450.3"/>
</dbReference>
<dbReference type="RefSeq" id="WP_011014950.1">
    <property type="nucleotide sequence ID" value="NC_006958.1"/>
</dbReference>
<dbReference type="PDB" id="7Q21">
    <property type="method" value="EM"/>
    <property type="resolution" value="3.00 A"/>
    <property type="chains" value="F/f=1-143"/>
</dbReference>
<dbReference type="PDB" id="7QHM">
    <property type="method" value="EM"/>
    <property type="resolution" value="2.80 A"/>
    <property type="chains" value="G/T=1-143"/>
</dbReference>
<dbReference type="PDB" id="7QHO">
    <property type="method" value="EM"/>
    <property type="resolution" value="3.10 A"/>
    <property type="chains" value="G/T=1-143"/>
</dbReference>
<dbReference type="PDBsum" id="7Q21"/>
<dbReference type="PDBsum" id="7QHM"/>
<dbReference type="PDBsum" id="7QHO"/>
<dbReference type="EMDB" id="EMD-13777"/>
<dbReference type="EMDB" id="EMD-13976"/>
<dbReference type="EMDB" id="EMD-13977"/>
<dbReference type="SMR" id="Q8NNK3"/>
<dbReference type="STRING" id="196627.cg2408"/>
<dbReference type="TCDB" id="3.D.4.4.2">
    <property type="family name" value="the proton-translocating cytochrome oxidase (cox) superfamily"/>
</dbReference>
<dbReference type="KEGG" id="cgb:cg2408"/>
<dbReference type="KEGG" id="cgl:Cgl2194"/>
<dbReference type="PATRIC" id="fig|196627.13.peg.2130"/>
<dbReference type="eggNOG" id="ENOG5032TTI">
    <property type="taxonomic scope" value="Bacteria"/>
</dbReference>
<dbReference type="HOGENOM" id="CLU_145919_0_0_11"/>
<dbReference type="OrthoDB" id="5244617at2"/>
<dbReference type="BioCyc" id="CORYNE:G18NG-11786-MONOMER"/>
<dbReference type="Proteomes" id="UP000000582">
    <property type="component" value="Chromosome"/>
</dbReference>
<dbReference type="Proteomes" id="UP000001009">
    <property type="component" value="Chromosome"/>
</dbReference>
<dbReference type="GO" id="GO:0005886">
    <property type="term" value="C:plasma membrane"/>
    <property type="evidence" value="ECO:0007669"/>
    <property type="project" value="UniProtKB-SubCell"/>
</dbReference>
<dbReference type="GO" id="GO:0004129">
    <property type="term" value="F:cytochrome-c oxidase activity"/>
    <property type="evidence" value="ECO:0007669"/>
    <property type="project" value="UniProtKB-EC"/>
</dbReference>
<dbReference type="GO" id="GO:0022900">
    <property type="term" value="P:electron transport chain"/>
    <property type="evidence" value="ECO:0007669"/>
    <property type="project" value="InterPro"/>
</dbReference>
<dbReference type="InterPro" id="IPR021050">
    <property type="entry name" value="Cyt_c_oxidase_su4_actinobac"/>
</dbReference>
<dbReference type="Pfam" id="PF12270">
    <property type="entry name" value="Cyt_c_ox_IV"/>
    <property type="match status" value="1"/>
</dbReference>
<dbReference type="PIRSF" id="PIRSF017385">
    <property type="entry name" value="CtaF"/>
    <property type="match status" value="1"/>
</dbReference>
<accession>Q8NNK3</accession>
<accession>Q6M3N9</accession>
<keyword id="KW-0002">3D-structure</keyword>
<keyword id="KW-1003">Cell membrane</keyword>
<keyword id="KW-0472">Membrane</keyword>
<keyword id="KW-1185">Reference proteome</keyword>
<keyword id="KW-1278">Translocase</keyword>
<keyword id="KW-0812">Transmembrane</keyword>
<keyword id="KW-1133">Transmembrane helix</keyword>
<reference key="1">
    <citation type="journal article" date="2003" name="Appl. Microbiol. Biotechnol.">
        <title>The Corynebacterium glutamicum genome: features and impacts on biotechnological processes.</title>
        <authorList>
            <person name="Ikeda M."/>
            <person name="Nakagawa S."/>
        </authorList>
    </citation>
    <scope>NUCLEOTIDE SEQUENCE [LARGE SCALE GENOMIC DNA]</scope>
    <source>
        <strain>ATCC 13032 / DSM 20300 / JCM 1318 / BCRC 11384 / CCUG 27702 / LMG 3730 / NBRC 12168 / NCIMB 10025 / NRRL B-2784 / 534</strain>
    </source>
</reference>
<reference key="2">
    <citation type="journal article" date="2003" name="J. Biotechnol.">
        <title>The complete Corynebacterium glutamicum ATCC 13032 genome sequence and its impact on the production of L-aspartate-derived amino acids and vitamins.</title>
        <authorList>
            <person name="Kalinowski J."/>
            <person name="Bathe B."/>
            <person name="Bartels D."/>
            <person name="Bischoff N."/>
            <person name="Bott M."/>
            <person name="Burkovski A."/>
            <person name="Dusch N."/>
            <person name="Eggeling L."/>
            <person name="Eikmanns B.J."/>
            <person name="Gaigalat L."/>
            <person name="Goesmann A."/>
            <person name="Hartmann M."/>
            <person name="Huthmacher K."/>
            <person name="Kraemer R."/>
            <person name="Linke B."/>
            <person name="McHardy A.C."/>
            <person name="Meyer F."/>
            <person name="Moeckel B."/>
            <person name="Pfefferle W."/>
            <person name="Puehler A."/>
            <person name="Rey D.A."/>
            <person name="Rueckert C."/>
            <person name="Rupp O."/>
            <person name="Sahm H."/>
            <person name="Wendisch V.F."/>
            <person name="Wiegraebe I."/>
            <person name="Tauch A."/>
        </authorList>
    </citation>
    <scope>NUCLEOTIDE SEQUENCE [LARGE SCALE GENOMIC DNA]</scope>
    <source>
        <strain>ATCC 13032 / DSM 20300 / JCM 1318 / BCRC 11384 / CCUG 27702 / LMG 3730 / NBRC 12168 / NCIMB 10025 / NRRL B-2784 / 534</strain>
    </source>
</reference>
<reference key="3">
    <citation type="journal article" date="2003" name="J. Biol. Chem.">
        <title>Purification of a cytochrome bc1-aa3 supercomplex with quinol oxidase activity from Corynebacterium glutamicum. Identification of a fourth subunity of cytochrome aa3 oxidase and mutational analysis of diheme cytochrome c1.</title>
        <authorList>
            <person name="Niebisch A."/>
            <person name="Bott M."/>
        </authorList>
    </citation>
    <scope>IDENTIFICATION AS A SUBUNIT OF CYTOCHROME C OXIDASE</scope>
    <scope>DETECTION IN A SUPERCOMPLEX WITH MENAQUINOL-CYTOCHROME C REDUCTASE (CYTOCHROME BC1)</scope>
    <source>
        <strain>ATCC 13032 / DSM 20300 / JCM 1318 / BCRC 11384 / CCUG 27702 / LMG 3730 / NBRC 12168 / NCIMB 10025 / NRRL B-2784 / 534</strain>
    </source>
</reference>
<protein>
    <recommendedName>
        <fullName>Cytochrome c oxidase polypeptide 4</fullName>
        <ecNumber>7.1.1.9</ecNumber>
    </recommendedName>
    <alternativeName>
        <fullName>Cytochrome aa3 subunit 4</fullName>
    </alternativeName>
    <alternativeName>
        <fullName>Cytochrome c oxidase polypeptide IV</fullName>
    </alternativeName>
</protein>
<organism>
    <name type="scientific">Corynebacterium glutamicum (strain ATCC 13032 / DSM 20300 / JCM 1318 / BCRC 11384 / CCUG 27702 / LMG 3730 / NBRC 12168 / NCIMB 10025 / NRRL B-2784 / 534)</name>
    <dbReference type="NCBI Taxonomy" id="196627"/>
    <lineage>
        <taxon>Bacteria</taxon>
        <taxon>Bacillati</taxon>
        <taxon>Actinomycetota</taxon>
        <taxon>Actinomycetes</taxon>
        <taxon>Mycobacteriales</taxon>
        <taxon>Corynebacteriaceae</taxon>
        <taxon>Corynebacterium</taxon>
    </lineage>
</organism>
<sequence>MKSSAKLMYGPTVFMAAMAVIYIFATMHVSDGGSVKGVEWVGSVALVLSAGLTLMLGVYLHFTEVRVDVLPEDWEEAEVADKAGTLGFFSPSSIWPAAMSGAVGFLAFGVVYFHYWMIAVGLMLLIFTITKLNLQYGVPKEKH</sequence>
<name>COX4_CORGL</name>
<evidence type="ECO:0000255" key="1"/>
<evidence type="ECO:0000305" key="2"/>
<evidence type="ECO:0007829" key="3">
    <source>
        <dbReference type="PDB" id="7QHM"/>
    </source>
</evidence>